<dbReference type="EC" id="7.1.2.2" evidence="2"/>
<dbReference type="EMBL" id="CP000909">
    <property type="protein sequence ID" value="ABY36242.1"/>
    <property type="molecule type" value="Genomic_DNA"/>
</dbReference>
<dbReference type="RefSeq" id="WP_012258895.1">
    <property type="nucleotide sequence ID" value="NC_010175.1"/>
</dbReference>
<dbReference type="RefSeq" id="YP_001636631.1">
    <property type="nucleotide sequence ID" value="NC_010175.1"/>
</dbReference>
<dbReference type="SMR" id="A9WGS6"/>
<dbReference type="FunCoup" id="A9WGS6">
    <property type="interactions" value="451"/>
</dbReference>
<dbReference type="STRING" id="324602.Caur_3043"/>
<dbReference type="EnsemblBacteria" id="ABY36242">
    <property type="protein sequence ID" value="ABY36242"/>
    <property type="gene ID" value="Caur_3043"/>
</dbReference>
<dbReference type="KEGG" id="cau:Caur_3043"/>
<dbReference type="PATRIC" id="fig|324602.8.peg.3444"/>
<dbReference type="eggNOG" id="COG0056">
    <property type="taxonomic scope" value="Bacteria"/>
</dbReference>
<dbReference type="HOGENOM" id="CLU_010091_2_1_0"/>
<dbReference type="InParanoid" id="A9WGS6"/>
<dbReference type="Proteomes" id="UP000002008">
    <property type="component" value="Chromosome"/>
</dbReference>
<dbReference type="GO" id="GO:0005886">
    <property type="term" value="C:plasma membrane"/>
    <property type="evidence" value="ECO:0007669"/>
    <property type="project" value="UniProtKB-SubCell"/>
</dbReference>
<dbReference type="GO" id="GO:0045259">
    <property type="term" value="C:proton-transporting ATP synthase complex"/>
    <property type="evidence" value="ECO:0007669"/>
    <property type="project" value="UniProtKB-KW"/>
</dbReference>
<dbReference type="GO" id="GO:0043531">
    <property type="term" value="F:ADP binding"/>
    <property type="evidence" value="ECO:0000318"/>
    <property type="project" value="GO_Central"/>
</dbReference>
<dbReference type="GO" id="GO:0005524">
    <property type="term" value="F:ATP binding"/>
    <property type="evidence" value="ECO:0000318"/>
    <property type="project" value="GO_Central"/>
</dbReference>
<dbReference type="GO" id="GO:0046933">
    <property type="term" value="F:proton-transporting ATP synthase activity, rotational mechanism"/>
    <property type="evidence" value="ECO:0007669"/>
    <property type="project" value="UniProtKB-UniRule"/>
</dbReference>
<dbReference type="GO" id="GO:0015986">
    <property type="term" value="P:proton motive force-driven ATP synthesis"/>
    <property type="evidence" value="ECO:0000318"/>
    <property type="project" value="GO_Central"/>
</dbReference>
<dbReference type="CDD" id="cd18113">
    <property type="entry name" value="ATP-synt_F1_alpha_C"/>
    <property type="match status" value="1"/>
</dbReference>
<dbReference type="CDD" id="cd18116">
    <property type="entry name" value="ATP-synt_F1_alpha_N"/>
    <property type="match status" value="1"/>
</dbReference>
<dbReference type="CDD" id="cd01132">
    <property type="entry name" value="F1-ATPase_alpha_CD"/>
    <property type="match status" value="1"/>
</dbReference>
<dbReference type="FunFam" id="1.20.150.20:FF:000001">
    <property type="entry name" value="ATP synthase subunit alpha"/>
    <property type="match status" value="1"/>
</dbReference>
<dbReference type="FunFam" id="3.40.50.300:FF:000002">
    <property type="entry name" value="ATP synthase subunit alpha"/>
    <property type="match status" value="1"/>
</dbReference>
<dbReference type="Gene3D" id="2.40.30.20">
    <property type="match status" value="1"/>
</dbReference>
<dbReference type="Gene3D" id="1.20.150.20">
    <property type="entry name" value="ATP synthase alpha/beta chain, C-terminal domain"/>
    <property type="match status" value="1"/>
</dbReference>
<dbReference type="Gene3D" id="3.40.50.300">
    <property type="entry name" value="P-loop containing nucleotide triphosphate hydrolases"/>
    <property type="match status" value="1"/>
</dbReference>
<dbReference type="HAMAP" id="MF_01346">
    <property type="entry name" value="ATP_synth_alpha_bact"/>
    <property type="match status" value="1"/>
</dbReference>
<dbReference type="InterPro" id="IPR023366">
    <property type="entry name" value="ATP_synth_asu-like_sf"/>
</dbReference>
<dbReference type="InterPro" id="IPR000793">
    <property type="entry name" value="ATP_synth_asu_C"/>
</dbReference>
<dbReference type="InterPro" id="IPR038376">
    <property type="entry name" value="ATP_synth_asu_C_sf"/>
</dbReference>
<dbReference type="InterPro" id="IPR033732">
    <property type="entry name" value="ATP_synth_F1_a_nt-bd_dom"/>
</dbReference>
<dbReference type="InterPro" id="IPR005294">
    <property type="entry name" value="ATP_synth_F1_asu"/>
</dbReference>
<dbReference type="InterPro" id="IPR020003">
    <property type="entry name" value="ATPase_a/bsu_AS"/>
</dbReference>
<dbReference type="InterPro" id="IPR004100">
    <property type="entry name" value="ATPase_F1/V1/A1_a/bsu_N"/>
</dbReference>
<dbReference type="InterPro" id="IPR036121">
    <property type="entry name" value="ATPase_F1/V1/A1_a/bsu_N_sf"/>
</dbReference>
<dbReference type="InterPro" id="IPR000194">
    <property type="entry name" value="ATPase_F1/V1/A1_a/bsu_nucl-bd"/>
</dbReference>
<dbReference type="InterPro" id="IPR027417">
    <property type="entry name" value="P-loop_NTPase"/>
</dbReference>
<dbReference type="NCBIfam" id="TIGR00962">
    <property type="entry name" value="atpA"/>
    <property type="match status" value="1"/>
</dbReference>
<dbReference type="NCBIfam" id="NF009884">
    <property type="entry name" value="PRK13343.1"/>
    <property type="match status" value="1"/>
</dbReference>
<dbReference type="PANTHER" id="PTHR48082">
    <property type="entry name" value="ATP SYNTHASE SUBUNIT ALPHA, MITOCHONDRIAL"/>
    <property type="match status" value="1"/>
</dbReference>
<dbReference type="PANTHER" id="PTHR48082:SF2">
    <property type="entry name" value="ATP SYNTHASE SUBUNIT ALPHA, MITOCHONDRIAL"/>
    <property type="match status" value="1"/>
</dbReference>
<dbReference type="Pfam" id="PF00006">
    <property type="entry name" value="ATP-synt_ab"/>
    <property type="match status" value="1"/>
</dbReference>
<dbReference type="Pfam" id="PF00306">
    <property type="entry name" value="ATP-synt_ab_C"/>
    <property type="match status" value="1"/>
</dbReference>
<dbReference type="Pfam" id="PF02874">
    <property type="entry name" value="ATP-synt_ab_N"/>
    <property type="match status" value="1"/>
</dbReference>
<dbReference type="SUPFAM" id="SSF47917">
    <property type="entry name" value="C-terminal domain of alpha and beta subunits of F1 ATP synthase"/>
    <property type="match status" value="1"/>
</dbReference>
<dbReference type="SUPFAM" id="SSF50615">
    <property type="entry name" value="N-terminal domain of alpha and beta subunits of F1 ATP synthase"/>
    <property type="match status" value="1"/>
</dbReference>
<dbReference type="SUPFAM" id="SSF52540">
    <property type="entry name" value="P-loop containing nucleoside triphosphate hydrolases"/>
    <property type="match status" value="1"/>
</dbReference>
<dbReference type="PROSITE" id="PS00152">
    <property type="entry name" value="ATPASE_ALPHA_BETA"/>
    <property type="match status" value="1"/>
</dbReference>
<sequence>MTTITEELIARLKQGITSGVDLQPRQVNVGTVIAVGDGVARLSGLDQVVASEIVEFPPKAGRNESIYGIALNLEQDSVAAIILGDDETIEEGDMVTSTGRVISVPVGQGLLGRVVNPLGQPIDGKGPIVYEKTRPIERIAPGVITRKSVDTPVQTGIIAIDALIPIGRGQRELIIGDRQTGKTAVAIDTILNQKGQGMVCIYVAIGQRRAQVAQVVGTLERFGAMEYTIVVSATASESAALQYIAPYAGCAMGEEIMENGVMLNGQLVKDALIVYDDLSKHAVAYRQVSLLLRRPPGREAYPGDVFYLHSRLLERAARLNEEYGGGSLTALPVIETQANDVSAYIPTNVISITDGQIYLESDLFNAGQRPALNVGISVSRVGGAAQTRAMRAVAGKLKGELAQFRDLAAFAQFASDLDATTKAQIERGQRLQELLKQPQYQPLPVEDQVAVLYAATNNYLDDVPVPLITKWRDDFLAFLRTAHPEVRKLIYDNRLDRKFPTPEVKEALEAAIKEFKATSNYS</sequence>
<protein>
    <recommendedName>
        <fullName evidence="2">ATP synthase subunit alpha</fullName>
        <ecNumber evidence="2">7.1.2.2</ecNumber>
    </recommendedName>
    <alternativeName>
        <fullName evidence="2">ATP synthase F1 sector subunit alpha</fullName>
    </alternativeName>
    <alternativeName>
        <fullName evidence="2">F-ATPase subunit alpha</fullName>
    </alternativeName>
</protein>
<keyword id="KW-0066">ATP synthesis</keyword>
<keyword id="KW-0067">ATP-binding</keyword>
<keyword id="KW-1003">Cell membrane</keyword>
<keyword id="KW-0139">CF(1)</keyword>
<keyword id="KW-0375">Hydrogen ion transport</keyword>
<keyword id="KW-0406">Ion transport</keyword>
<keyword id="KW-0472">Membrane</keyword>
<keyword id="KW-0547">Nucleotide-binding</keyword>
<keyword id="KW-1185">Reference proteome</keyword>
<keyword id="KW-1278">Translocase</keyword>
<keyword id="KW-0813">Transport</keyword>
<evidence type="ECO:0000250" key="1"/>
<evidence type="ECO:0000255" key="2">
    <source>
        <dbReference type="HAMAP-Rule" id="MF_01346"/>
    </source>
</evidence>
<comment type="function">
    <text evidence="2">Produces ATP from ADP in the presence of a proton gradient across the membrane. The alpha chain is a regulatory subunit.</text>
</comment>
<comment type="catalytic activity">
    <reaction evidence="2">
        <text>ATP + H2O + 4 H(+)(in) = ADP + phosphate + 5 H(+)(out)</text>
        <dbReference type="Rhea" id="RHEA:57720"/>
        <dbReference type="ChEBI" id="CHEBI:15377"/>
        <dbReference type="ChEBI" id="CHEBI:15378"/>
        <dbReference type="ChEBI" id="CHEBI:30616"/>
        <dbReference type="ChEBI" id="CHEBI:43474"/>
        <dbReference type="ChEBI" id="CHEBI:456216"/>
        <dbReference type="EC" id="7.1.2.2"/>
    </reaction>
</comment>
<comment type="subunit">
    <text evidence="1">F-type ATPases have 2 components, CF(1) - the catalytic core - and CF(0) - the membrane proton channel. CF(1) has five subunits: alpha(3), beta(3), gamma(1), delta(1), epsilon(1). CF(0) has four main subunits: a(1), b(1), b'(1) and c(9-12) (By similarity).</text>
</comment>
<comment type="subcellular location">
    <subcellularLocation>
        <location evidence="2">Cell membrane</location>
        <topology evidence="2">Peripheral membrane protein</topology>
    </subcellularLocation>
</comment>
<comment type="similarity">
    <text evidence="2">Belongs to the ATPase alpha/beta chains family.</text>
</comment>
<gene>
    <name evidence="2" type="primary">atpA</name>
    <name type="ordered locus">Caur_3043</name>
</gene>
<feature type="chain" id="PRO_0000339028" description="ATP synthase subunit alpha">
    <location>
        <begin position="1"/>
        <end position="522"/>
    </location>
</feature>
<feature type="binding site" evidence="2">
    <location>
        <begin position="176"/>
        <end position="183"/>
    </location>
    <ligand>
        <name>ATP</name>
        <dbReference type="ChEBI" id="CHEBI:30616"/>
    </ligand>
</feature>
<feature type="site" description="Required for activity" evidence="2">
    <location>
        <position position="377"/>
    </location>
</feature>
<name>ATPA_CHLAA</name>
<accession>A9WGS6</accession>
<reference key="1">
    <citation type="journal article" date="2011" name="BMC Genomics">
        <title>Complete genome sequence of the filamentous anoxygenic phototrophic bacterium Chloroflexus aurantiacus.</title>
        <authorList>
            <person name="Tang K.H."/>
            <person name="Barry K."/>
            <person name="Chertkov O."/>
            <person name="Dalin E."/>
            <person name="Han C.S."/>
            <person name="Hauser L.J."/>
            <person name="Honchak B.M."/>
            <person name="Karbach L.E."/>
            <person name="Land M.L."/>
            <person name="Lapidus A."/>
            <person name="Larimer F.W."/>
            <person name="Mikhailova N."/>
            <person name="Pitluck S."/>
            <person name="Pierson B.K."/>
            <person name="Blankenship R.E."/>
        </authorList>
    </citation>
    <scope>NUCLEOTIDE SEQUENCE [LARGE SCALE GENOMIC DNA]</scope>
    <source>
        <strain>ATCC 29366 / DSM 635 / J-10-fl</strain>
    </source>
</reference>
<organism>
    <name type="scientific">Chloroflexus aurantiacus (strain ATCC 29366 / DSM 635 / J-10-fl)</name>
    <dbReference type="NCBI Taxonomy" id="324602"/>
    <lineage>
        <taxon>Bacteria</taxon>
        <taxon>Bacillati</taxon>
        <taxon>Chloroflexota</taxon>
        <taxon>Chloroflexia</taxon>
        <taxon>Chloroflexales</taxon>
        <taxon>Chloroflexineae</taxon>
        <taxon>Chloroflexaceae</taxon>
        <taxon>Chloroflexus</taxon>
    </lineage>
</organism>
<proteinExistence type="inferred from homology"/>